<dbReference type="EC" id="2.4.1.102" evidence="3"/>
<dbReference type="EC" id="2.4.1.148" evidence="3"/>
<dbReference type="EC" id="2.4.1.150" evidence="3"/>
<dbReference type="EMBL" id="AF231105">
    <property type="protein sequence ID" value="AAF72001.1"/>
    <property type="molecule type" value="Genomic_DNA"/>
</dbReference>
<dbReference type="SMR" id="Q9IZK2"/>
<dbReference type="CAZy" id="GT14">
    <property type="family name" value="Glycosyltransferase Family 14"/>
</dbReference>
<dbReference type="GlyCosmos" id="Q9IZK2">
    <property type="glycosylation" value="2 sites, No reported glycans"/>
</dbReference>
<dbReference type="BRENDA" id="2.4.1.102">
    <property type="organism ID" value="923"/>
</dbReference>
<dbReference type="BRENDA" id="2.4.1.148">
    <property type="organism ID" value="923"/>
</dbReference>
<dbReference type="UniPathway" id="UPA00378"/>
<dbReference type="GO" id="GO:0044178">
    <property type="term" value="C:host cell Golgi membrane"/>
    <property type="evidence" value="ECO:0007669"/>
    <property type="project" value="UniProtKB-SubCell"/>
</dbReference>
<dbReference type="GO" id="GO:0016020">
    <property type="term" value="C:membrane"/>
    <property type="evidence" value="ECO:0007669"/>
    <property type="project" value="UniProtKB-KW"/>
</dbReference>
<dbReference type="GO" id="GO:0047225">
    <property type="term" value="F:acetylgalactosaminyl-O-glycosyl-glycoprotein beta-1,6-N-acetylglucosaminyltransferase activity"/>
    <property type="evidence" value="ECO:0007669"/>
    <property type="project" value="UniProtKB-EC"/>
</dbReference>
<dbReference type="GO" id="GO:0003829">
    <property type="term" value="F:beta-1,3-galactosyl-O-glycosyl-glycoprotein beta-1,6-N-acetylglucosaminyltransferase activity"/>
    <property type="evidence" value="ECO:0007669"/>
    <property type="project" value="UniProtKB-EC"/>
</dbReference>
<dbReference type="GO" id="GO:0008109">
    <property type="term" value="F:N-acetyllactosaminide beta-1,6-N-acetylglucosaminyltransferase activity"/>
    <property type="evidence" value="ECO:0007669"/>
    <property type="project" value="UniProtKB-EC"/>
</dbReference>
<dbReference type="GO" id="GO:0006486">
    <property type="term" value="P:protein glycosylation"/>
    <property type="evidence" value="ECO:0007669"/>
    <property type="project" value="UniProtKB-UniPathway"/>
</dbReference>
<dbReference type="InterPro" id="IPR003406">
    <property type="entry name" value="Glyco_trans_14"/>
</dbReference>
<dbReference type="PANTHER" id="PTHR19297:SF81">
    <property type="entry name" value="BETA-1,3-GALACTOSYL-O-GLYCOSYL-GLYCOPROTEIN BETA-1,6-N-ACETYLGLUCOSAMINYLTRANSFERASE 3"/>
    <property type="match status" value="1"/>
</dbReference>
<dbReference type="PANTHER" id="PTHR19297">
    <property type="entry name" value="GLYCOSYLTRANSFERASE 14 FAMILY MEMBER"/>
    <property type="match status" value="1"/>
</dbReference>
<dbReference type="Pfam" id="PF02485">
    <property type="entry name" value="Branch"/>
    <property type="match status" value="1"/>
</dbReference>
<protein>
    <recommendedName>
        <fullName>Beta-1,3-galactosyl-O-glycosyl-glycoprotein beta-1,6-N-acetylglucosaminyltransferase</fullName>
        <ecNumber evidence="3">2.4.1.102</ecNumber>
        <ecNumber evidence="3">2.4.1.148</ecNumber>
        <ecNumber evidence="3">2.4.1.150</ecNumber>
    </recommendedName>
    <alternativeName>
        <fullName>BORFF3-4</fullName>
    </alternativeName>
    <alternativeName>
        <fullName>C2GnT-mucin type</fullName>
        <shortName>C2GnT-M</shortName>
    </alternativeName>
</protein>
<accession>Q9IZK2</accession>
<sequence>MKMAGWKKKLCPGHHLWALGCYMLLAVVSLRLSLRFKCDVDSLDLESRDFQSQHCRDMLYNSLKLPAKRSINCSGITRGDQEAVVQALLDNLEVKKKRPPLTDTYYLNITRDCERFKAQRKFIQFPLSKEELDFPIAYSMVVHEKIENFERLLRAVYAPQNIYCVHVDVKSPETFKEAVKAIISCFPNVFMASKLVPVVYASWSRVQADLNCMEDLLQSSVSWKYLLNTCGTDFPIKTNAEMVLALKMLKGKNSMESEVPSESKKNRWKYRYEVTDTLYPTSKIKDPPPDNLPMFTGNAYFVASRAFVQHVLDNPKSQILVEWVKDTYSPDEHLWATLQRAPWMPGSVPSHPKYHISDMTAIARLVKWQYHEGDVSMGAPYAPCSGIHRRAICIYGAGDLYWILQNHHLLANKFDPRVDDNVLQCLEEYLRHKAIYGTEL</sequence>
<name>GCNT3_BHV4V</name>
<keyword id="KW-1015">Disulfide bond</keyword>
<keyword id="KW-0325">Glycoprotein</keyword>
<keyword id="KW-0328">Glycosyltransferase</keyword>
<keyword id="KW-1040">Host Golgi apparatus</keyword>
<keyword id="KW-1043">Host membrane</keyword>
<keyword id="KW-0472">Membrane</keyword>
<keyword id="KW-0735">Signal-anchor</keyword>
<keyword id="KW-0808">Transferase</keyword>
<keyword id="KW-0812">Transmembrane</keyword>
<keyword id="KW-1133">Transmembrane helix</keyword>
<evidence type="ECO:0000250" key="1"/>
<evidence type="ECO:0000255" key="2"/>
<evidence type="ECO:0000269" key="3">
    <source>
    </source>
</evidence>
<evidence type="ECO:0000269" key="4">
    <source>
    </source>
</evidence>
<evidence type="ECO:0000305" key="5"/>
<organism>
    <name type="scientific">Bovine herpesvirus 4 (strain V. test)</name>
    <name type="common">BoHV-4</name>
    <name type="synonym">Movar virus</name>
    <dbReference type="NCBI Taxonomy" id="436507"/>
    <lineage>
        <taxon>Viruses</taxon>
        <taxon>Duplodnaviria</taxon>
        <taxon>Heunggongvirae</taxon>
        <taxon>Peploviricota</taxon>
        <taxon>Herviviricetes</taxon>
        <taxon>Herpesvirales</taxon>
        <taxon>Orthoherpesviridae</taxon>
        <taxon>Gammaherpesvirinae</taxon>
        <taxon>Rhadinovirus</taxon>
        <taxon>Rhadinovirus bovinegamma4</taxon>
    </lineage>
</organism>
<feature type="chain" id="PRO_0000288554" description="Beta-1,3-galactosyl-O-glycosyl-glycoprotein beta-1,6-N-acetylglucosaminyltransferase">
    <location>
        <begin position="1"/>
        <end position="440"/>
    </location>
</feature>
<feature type="topological domain" description="Cytoplasmic" evidence="2">
    <location>
        <begin position="1"/>
        <end position="9"/>
    </location>
</feature>
<feature type="transmembrane region" description="Helical; Signal-anchor for type II membrane protein" evidence="2">
    <location>
        <begin position="10"/>
        <end position="30"/>
    </location>
</feature>
<feature type="topological domain" description="Lumenal" evidence="2">
    <location>
        <begin position="31"/>
        <end position="440"/>
    </location>
</feature>
<feature type="glycosylation site" description="N-linked (GlcNAc...) asparagine; by host" evidence="2">
    <location>
        <position position="72"/>
    </location>
</feature>
<feature type="glycosylation site" description="N-linked (GlcNAc...) asparagine; by host" evidence="2">
    <location>
        <position position="108"/>
    </location>
</feature>
<feature type="disulfide bond" evidence="1">
    <location>
        <begin position="73"/>
        <end position="230"/>
    </location>
</feature>
<feature type="disulfide bond" evidence="1">
    <location>
        <begin position="164"/>
        <end position="384"/>
    </location>
</feature>
<feature type="disulfide bond" evidence="1">
    <location>
        <begin position="185"/>
        <end position="212"/>
    </location>
</feature>
<feature type="disulfide bond" evidence="1">
    <location>
        <begin position="393"/>
        <end position="425"/>
    </location>
</feature>
<gene>
    <name type="primary">Bo17</name>
</gene>
<proteinExistence type="evidence at protein level"/>
<organismHost>
    <name type="scientific">Bos taurus</name>
    <name type="common">Bovine</name>
    <dbReference type="NCBI Taxonomy" id="9913"/>
</organismHost>
<comment type="function">
    <text evidence="3 4">Non-essential glycosyltransferase that can synthesize all known mucin beta 6 N-acetylglucosaminides. Mediates core 2 and core 4 O-glycan branching, 2 important steps in mucin-type biosynthesis. Has also I-branching enzyme activity by converting linear into branched poly-N-acetyllactosaminoglycans. Contributes to the post-translational modifications of structural proteins.</text>
</comment>
<comment type="catalytic activity">
    <reaction evidence="3">
        <text>a 3-O-[beta-D-galactosyl-(1-&gt;3)-N-acetyl-alpha-D-galactosaminyl]-L-seryl-[protein] + UDP-N-acetyl-alpha-D-glucosamine = 3-O-{beta-D-galactosyl-(1-&gt;3)-[N-acetyl-beta-D-glucosaminyl-(1-&gt;6)]-N-acetyl-alpha-D-galactosaminyl}-L-seryl-[protein] + UDP + H(+)</text>
        <dbReference type="Rhea" id="RHEA:56212"/>
        <dbReference type="Rhea" id="RHEA-COMP:13922"/>
        <dbReference type="Rhea" id="RHEA-COMP:14419"/>
        <dbReference type="ChEBI" id="CHEBI:15378"/>
        <dbReference type="ChEBI" id="CHEBI:57705"/>
        <dbReference type="ChEBI" id="CHEBI:58223"/>
        <dbReference type="ChEBI" id="CHEBI:137949"/>
        <dbReference type="ChEBI" id="CHEBI:139605"/>
        <dbReference type="EC" id="2.4.1.102"/>
    </reaction>
</comment>
<comment type="catalytic activity">
    <reaction evidence="3">
        <text>a 3-O-[beta-D-galactosyl-(1-&gt;3)-N-acetyl-alpha-D-galactosaminyl]-L-threonyl-[protein] + UDP-N-acetyl-alpha-D-glucosamine = a 3-O-{beta-D-galactosyl-(1-&gt;3)-[N-acetyl-beta-D-glucosaminyl-(1-&gt;6)]-N-acetyl-alpha-D-galactosaminyl}-L-threonyl-[protein] + UDP + H(+)</text>
        <dbReference type="Rhea" id="RHEA:56216"/>
        <dbReference type="Rhea" id="RHEA-COMP:13923"/>
        <dbReference type="Rhea" id="RHEA-COMP:14420"/>
        <dbReference type="ChEBI" id="CHEBI:15378"/>
        <dbReference type="ChEBI" id="CHEBI:57705"/>
        <dbReference type="ChEBI" id="CHEBI:58223"/>
        <dbReference type="ChEBI" id="CHEBI:137950"/>
        <dbReference type="ChEBI" id="CHEBI:139607"/>
        <dbReference type="EC" id="2.4.1.102"/>
    </reaction>
</comment>
<comment type="catalytic activity">
    <reaction evidence="3">
        <text>a beta-D-Gal-(1-&gt;4)-beta-D-GlcNAc-(1-&gt;3)-beta-D-Gal-(1-&gt;4)-beta-D-GlcNAc derivative + UDP-N-acetyl-alpha-D-glucosamine = a beta-D-Gal-(1-&gt;4)-beta-D-GlcNAc-(1-&gt;3)-[beta-D-GlcNAc-(1-&gt;6)]-beta-D-Gal-(1-&gt;4)-N-acetyl-beta-D-glucosaminyl derivative + UDP + H(+)</text>
        <dbReference type="Rhea" id="RHEA:54820"/>
        <dbReference type="ChEBI" id="CHEBI:15378"/>
        <dbReference type="ChEBI" id="CHEBI:57705"/>
        <dbReference type="ChEBI" id="CHEBI:58223"/>
        <dbReference type="ChEBI" id="CHEBI:138371"/>
        <dbReference type="ChEBI" id="CHEBI:138372"/>
        <dbReference type="EC" id="2.4.1.150"/>
    </reaction>
</comment>
<comment type="catalytic activity">
    <reaction evidence="3">
        <text>3-O-[N-acetyl-beta-D-glucosaminyl-(1-&gt;3)-N-acetyl-alpha-D-galactosaminyl]-L-seryl-[protein] + UDP-N-acetyl-alpha-D-glucosamine = 3-O-[N-acetyl-beta-D-glucosaminyl-(1-&gt;3)-[N-acetyl-beta-D-glucosaminyl-(1-&gt;6)]-N-acetyl-alpha-D-galactosaminyl]-L-seryl-[protein] + UDP + H(+)</text>
        <dbReference type="Rhea" id="RHEA:56188"/>
        <dbReference type="Rhea" id="RHEA-COMP:11691"/>
        <dbReference type="Rhea" id="RHEA-COMP:14412"/>
        <dbReference type="ChEBI" id="CHEBI:15378"/>
        <dbReference type="ChEBI" id="CHEBI:57705"/>
        <dbReference type="ChEBI" id="CHEBI:58223"/>
        <dbReference type="ChEBI" id="CHEBI:87079"/>
        <dbReference type="ChEBI" id="CHEBI:139581"/>
        <dbReference type="EC" id="2.4.1.148"/>
    </reaction>
</comment>
<comment type="catalytic activity">
    <reaction evidence="3">
        <text>a 3-O-[N-acetyl-beta-D-glucosaminyl-(1-&gt;3)-N-acetyl-alpha-D-galactosaminyl]-L-threonyl-[protein] + UDP-N-acetyl-alpha-D-glucosamine = 3-O-[N-acetyl-beta-D-glucosaminyl-(1-&gt;3)-[N-acetyl-beta-D-glucosaminyl-(1-&gt;6)]-N-acetyl-alpha-D-galactosaminyl]-L-threonyl-[protein] + UDP + H(+)</text>
        <dbReference type="Rhea" id="RHEA:56192"/>
        <dbReference type="Rhea" id="RHEA-COMP:11692"/>
        <dbReference type="Rhea" id="RHEA-COMP:14413"/>
        <dbReference type="ChEBI" id="CHEBI:15378"/>
        <dbReference type="ChEBI" id="CHEBI:57705"/>
        <dbReference type="ChEBI" id="CHEBI:58223"/>
        <dbReference type="ChEBI" id="CHEBI:87080"/>
        <dbReference type="ChEBI" id="CHEBI:139580"/>
        <dbReference type="EC" id="2.4.1.148"/>
    </reaction>
</comment>
<comment type="pathway">
    <text>Protein modification; protein glycosylation.</text>
</comment>
<comment type="subcellular location">
    <subcellularLocation>
        <location evidence="1">Host Golgi apparatus membrane</location>
        <topology evidence="1">Single-pass type II membrane protein</topology>
    </subcellularLocation>
</comment>
<comment type="developmental stage">
    <text evidence="3 4">Expressed during BHV-4 replication (at protein level).</text>
</comment>
<comment type="miscellaneous">
    <text>Was acquired from an ancestor of the African buffalo around 1.5 million years ago.</text>
</comment>
<comment type="similarity">
    <text evidence="5">Belongs to the glycosyltransferase 14 family.</text>
</comment>
<reference key="1">
    <citation type="journal article" date="2000" name="Proc. Natl. Acad. Sci. U.S.A.">
        <title>A multipotential beta -1,6-N-acetylglucosaminyl-transferase is encoded by bovine herpesvirus type 4.</title>
        <authorList>
            <person name="Vanderplasschen A."/>
            <person name="Markine-Goriaynoff N."/>
            <person name="Lomonte P."/>
            <person name="Suzuki M."/>
            <person name="Hiraoka N."/>
            <person name="Yeh J.-C."/>
            <person name="Bureau F."/>
            <person name="Willems L."/>
            <person name="Thiry E."/>
            <person name="Fukuda M."/>
            <person name="Pastoret P.-P."/>
        </authorList>
    </citation>
    <scope>NUCLEOTIDE SEQUENCE [GENOMIC DNA]</scope>
    <scope>FUNCTION</scope>
    <scope>CATALYTIC ACTIVITY</scope>
    <scope>DEVELOPMENTAL STAGE</scope>
</reference>
<reference key="2">
    <citation type="journal article" date="2004" name="J. Gen. Virol.">
        <title>The core 2 beta-1,6-N-acetylglucosaminyltransferase-M encoded by bovine herpesvirus 4 is not essential for virus replication despite contributing to post-translational modifications of structural proteins.</title>
        <authorList>
            <person name="Markine-Goriaynoff N."/>
            <person name="Gillet L."/>
            <person name="Karlsen O.A."/>
            <person name="Haarr L."/>
            <person name="Minner F."/>
            <person name="Pastoret P.-P."/>
            <person name="Fukuda M."/>
            <person name="Vanderplasschen A."/>
        </authorList>
    </citation>
    <scope>FUNCTION</scope>
    <scope>DEVELOPMENTAL STAGE</scope>
</reference>